<reference key="1">
    <citation type="journal article" date="2009" name="BMC Genomics">
        <title>Metabolic analysis of the soil microbe Dechloromonas aromatica str. RCB: indications of a surprisingly complex life-style and cryptic anaerobic pathways for aromatic degradation.</title>
        <authorList>
            <person name="Salinero K.K."/>
            <person name="Keller K."/>
            <person name="Feil W.S."/>
            <person name="Feil H."/>
            <person name="Trong S."/>
            <person name="Di Bartolo G."/>
            <person name="Lapidus A."/>
        </authorList>
    </citation>
    <scope>NUCLEOTIDE SEQUENCE [LARGE SCALE GENOMIC DNA]</scope>
    <source>
        <strain>RCB</strain>
    </source>
</reference>
<name>MRAY_DECAR</name>
<accession>Q47AA1</accession>
<organism>
    <name type="scientific">Dechloromonas aromatica (strain RCB)</name>
    <dbReference type="NCBI Taxonomy" id="159087"/>
    <lineage>
        <taxon>Bacteria</taxon>
        <taxon>Pseudomonadati</taxon>
        <taxon>Pseudomonadota</taxon>
        <taxon>Betaproteobacteria</taxon>
        <taxon>Rhodocyclales</taxon>
        <taxon>Azonexaceae</taxon>
        <taxon>Dechloromonas</taxon>
    </lineage>
</organism>
<protein>
    <recommendedName>
        <fullName evidence="1">Phospho-N-acetylmuramoyl-pentapeptide-transferase</fullName>
        <ecNumber evidence="1">2.7.8.13</ecNumber>
    </recommendedName>
    <alternativeName>
        <fullName evidence="1">UDP-MurNAc-pentapeptide phosphotransferase</fullName>
    </alternativeName>
</protein>
<feature type="chain" id="PRO_0000235450" description="Phospho-N-acetylmuramoyl-pentapeptide-transferase">
    <location>
        <begin position="1"/>
        <end position="367"/>
    </location>
</feature>
<feature type="transmembrane region" description="Helical" evidence="1">
    <location>
        <begin position="27"/>
        <end position="47"/>
    </location>
</feature>
<feature type="transmembrane region" description="Helical" evidence="1">
    <location>
        <begin position="73"/>
        <end position="93"/>
    </location>
</feature>
<feature type="transmembrane region" description="Helical" evidence="1">
    <location>
        <begin position="97"/>
        <end position="117"/>
    </location>
</feature>
<feature type="transmembrane region" description="Helical" evidence="1">
    <location>
        <begin position="132"/>
        <end position="152"/>
    </location>
</feature>
<feature type="transmembrane region" description="Helical" evidence="1">
    <location>
        <begin position="167"/>
        <end position="187"/>
    </location>
</feature>
<feature type="transmembrane region" description="Helical" evidence="1">
    <location>
        <begin position="200"/>
        <end position="220"/>
    </location>
</feature>
<feature type="transmembrane region" description="Helical" evidence="1">
    <location>
        <begin position="237"/>
        <end position="257"/>
    </location>
</feature>
<feature type="transmembrane region" description="Helical" evidence="1">
    <location>
        <begin position="264"/>
        <end position="284"/>
    </location>
</feature>
<feature type="transmembrane region" description="Helical" evidence="1">
    <location>
        <begin position="289"/>
        <end position="309"/>
    </location>
</feature>
<feature type="transmembrane region" description="Helical" evidence="1">
    <location>
        <begin position="344"/>
        <end position="364"/>
    </location>
</feature>
<proteinExistence type="inferred from homology"/>
<gene>
    <name evidence="1" type="primary">mraY</name>
    <name type="ordered locus">Daro_3501</name>
</gene>
<sequence>MLLALAQWLAQDVRFFNVFNYITLRAVLAAMTALLLSLAAGPAVIRWLAAKKIGQAVRNDGPQTHLVKSGTPTMGGVLILIAIGITTLLWGDLTNKYVWTVLVVTLGYGIVGWYDDWKKVVYRDPNGLASRWKFFWQSVLGIGAALFIAFSAKSPAQTELIIPFFKTMAYPLGVIGFITLTYFVIVGTSNAVNLTDGLDGLAIMPTVMIAAAFALIAYVTGHAVYAKYLLIPYVPGAGELCIFLGAIAGAGLGFLWFNAYPAEVFMGDVGALALGAALGTVAVIVRQEIVLLIMGGVFVIETLSVMLQVGYFKYTKRKYGEGRRILRMAPLHHHFEQTGWKETQVVVRFWIITIMLVLIGLSTLKLR</sequence>
<evidence type="ECO:0000255" key="1">
    <source>
        <dbReference type="HAMAP-Rule" id="MF_00038"/>
    </source>
</evidence>
<dbReference type="EC" id="2.7.8.13" evidence="1"/>
<dbReference type="EMBL" id="CP000089">
    <property type="protein sequence ID" value="AAZ48230.1"/>
    <property type="molecule type" value="Genomic_DNA"/>
</dbReference>
<dbReference type="SMR" id="Q47AA1"/>
<dbReference type="STRING" id="159087.Daro_3501"/>
<dbReference type="KEGG" id="dar:Daro_3501"/>
<dbReference type="eggNOG" id="COG0472">
    <property type="taxonomic scope" value="Bacteria"/>
</dbReference>
<dbReference type="HOGENOM" id="CLU_023982_0_0_4"/>
<dbReference type="OrthoDB" id="9805475at2"/>
<dbReference type="UniPathway" id="UPA00219"/>
<dbReference type="GO" id="GO:0005886">
    <property type="term" value="C:plasma membrane"/>
    <property type="evidence" value="ECO:0007669"/>
    <property type="project" value="UniProtKB-SubCell"/>
</dbReference>
<dbReference type="GO" id="GO:0046872">
    <property type="term" value="F:metal ion binding"/>
    <property type="evidence" value="ECO:0007669"/>
    <property type="project" value="UniProtKB-KW"/>
</dbReference>
<dbReference type="GO" id="GO:0008963">
    <property type="term" value="F:phospho-N-acetylmuramoyl-pentapeptide-transferase activity"/>
    <property type="evidence" value="ECO:0007669"/>
    <property type="project" value="UniProtKB-UniRule"/>
</dbReference>
<dbReference type="GO" id="GO:0051992">
    <property type="term" value="F:UDP-N-acetylmuramoyl-L-alanyl-D-glutamyl-meso-2,6-diaminopimelyl-D-alanyl-D-alanine:undecaprenyl-phosphate transferase activity"/>
    <property type="evidence" value="ECO:0007669"/>
    <property type="project" value="RHEA"/>
</dbReference>
<dbReference type="GO" id="GO:0051301">
    <property type="term" value="P:cell division"/>
    <property type="evidence" value="ECO:0007669"/>
    <property type="project" value="UniProtKB-KW"/>
</dbReference>
<dbReference type="GO" id="GO:0071555">
    <property type="term" value="P:cell wall organization"/>
    <property type="evidence" value="ECO:0007669"/>
    <property type="project" value="UniProtKB-KW"/>
</dbReference>
<dbReference type="GO" id="GO:0009252">
    <property type="term" value="P:peptidoglycan biosynthetic process"/>
    <property type="evidence" value="ECO:0007669"/>
    <property type="project" value="UniProtKB-UniRule"/>
</dbReference>
<dbReference type="GO" id="GO:0008360">
    <property type="term" value="P:regulation of cell shape"/>
    <property type="evidence" value="ECO:0007669"/>
    <property type="project" value="UniProtKB-KW"/>
</dbReference>
<dbReference type="CDD" id="cd06852">
    <property type="entry name" value="GT_MraY"/>
    <property type="match status" value="1"/>
</dbReference>
<dbReference type="HAMAP" id="MF_00038">
    <property type="entry name" value="MraY"/>
    <property type="match status" value="1"/>
</dbReference>
<dbReference type="InterPro" id="IPR000715">
    <property type="entry name" value="Glycosyl_transferase_4"/>
</dbReference>
<dbReference type="InterPro" id="IPR003524">
    <property type="entry name" value="PNAcMuramoyl-5peptid_Trfase"/>
</dbReference>
<dbReference type="InterPro" id="IPR018480">
    <property type="entry name" value="PNAcMuramoyl-5peptid_Trfase_CS"/>
</dbReference>
<dbReference type="NCBIfam" id="TIGR00445">
    <property type="entry name" value="mraY"/>
    <property type="match status" value="1"/>
</dbReference>
<dbReference type="PANTHER" id="PTHR22926">
    <property type="entry name" value="PHOSPHO-N-ACETYLMURAMOYL-PENTAPEPTIDE-TRANSFERASE"/>
    <property type="match status" value="1"/>
</dbReference>
<dbReference type="PANTHER" id="PTHR22926:SF5">
    <property type="entry name" value="PHOSPHO-N-ACETYLMURAMOYL-PENTAPEPTIDE-TRANSFERASE HOMOLOG"/>
    <property type="match status" value="1"/>
</dbReference>
<dbReference type="Pfam" id="PF00953">
    <property type="entry name" value="Glycos_transf_4"/>
    <property type="match status" value="1"/>
</dbReference>
<dbReference type="Pfam" id="PF10555">
    <property type="entry name" value="MraY_sig1"/>
    <property type="match status" value="1"/>
</dbReference>
<dbReference type="PROSITE" id="PS01347">
    <property type="entry name" value="MRAY_1"/>
    <property type="match status" value="1"/>
</dbReference>
<dbReference type="PROSITE" id="PS01348">
    <property type="entry name" value="MRAY_2"/>
    <property type="match status" value="1"/>
</dbReference>
<keyword id="KW-0131">Cell cycle</keyword>
<keyword id="KW-0132">Cell division</keyword>
<keyword id="KW-0997">Cell inner membrane</keyword>
<keyword id="KW-1003">Cell membrane</keyword>
<keyword id="KW-0133">Cell shape</keyword>
<keyword id="KW-0961">Cell wall biogenesis/degradation</keyword>
<keyword id="KW-0460">Magnesium</keyword>
<keyword id="KW-0472">Membrane</keyword>
<keyword id="KW-0479">Metal-binding</keyword>
<keyword id="KW-0573">Peptidoglycan synthesis</keyword>
<keyword id="KW-0808">Transferase</keyword>
<keyword id="KW-0812">Transmembrane</keyword>
<keyword id="KW-1133">Transmembrane helix</keyword>
<comment type="function">
    <text evidence="1">Catalyzes the initial step of the lipid cycle reactions in the biosynthesis of the cell wall peptidoglycan: transfers peptidoglycan precursor phospho-MurNAc-pentapeptide from UDP-MurNAc-pentapeptide onto the lipid carrier undecaprenyl phosphate, yielding undecaprenyl-pyrophosphoryl-MurNAc-pentapeptide, known as lipid I.</text>
</comment>
<comment type="catalytic activity">
    <reaction evidence="1">
        <text>UDP-N-acetyl-alpha-D-muramoyl-L-alanyl-gamma-D-glutamyl-meso-2,6-diaminopimeloyl-D-alanyl-D-alanine + di-trans,octa-cis-undecaprenyl phosphate = di-trans,octa-cis-undecaprenyl diphospho-N-acetyl-alpha-D-muramoyl-L-alanyl-D-glutamyl-meso-2,6-diaminopimeloyl-D-alanyl-D-alanine + UMP</text>
        <dbReference type="Rhea" id="RHEA:28386"/>
        <dbReference type="ChEBI" id="CHEBI:57865"/>
        <dbReference type="ChEBI" id="CHEBI:60392"/>
        <dbReference type="ChEBI" id="CHEBI:61386"/>
        <dbReference type="ChEBI" id="CHEBI:61387"/>
        <dbReference type="EC" id="2.7.8.13"/>
    </reaction>
</comment>
<comment type="cofactor">
    <cofactor evidence="1">
        <name>Mg(2+)</name>
        <dbReference type="ChEBI" id="CHEBI:18420"/>
    </cofactor>
</comment>
<comment type="pathway">
    <text evidence="1">Cell wall biogenesis; peptidoglycan biosynthesis.</text>
</comment>
<comment type="subcellular location">
    <subcellularLocation>
        <location evidence="1">Cell inner membrane</location>
        <topology evidence="1">Multi-pass membrane protein</topology>
    </subcellularLocation>
</comment>
<comment type="similarity">
    <text evidence="1">Belongs to the glycosyltransferase 4 family. MraY subfamily.</text>
</comment>